<gene>
    <name evidence="1" type="primary">atpE</name>
    <name type="ordered locus">BDU_99</name>
</gene>
<accession>B5RLH0</accession>
<protein>
    <recommendedName>
        <fullName evidence="1">V-type proton ATPase subunit E</fullName>
    </recommendedName>
    <alternativeName>
        <fullName evidence="1">V-ATPase subunit E</fullName>
    </alternativeName>
</protein>
<dbReference type="EMBL" id="CP000976">
    <property type="protein sequence ID" value="ACH93055.1"/>
    <property type="molecule type" value="Genomic_DNA"/>
</dbReference>
<dbReference type="RefSeq" id="WP_012537867.1">
    <property type="nucleotide sequence ID" value="NC_011229.1"/>
</dbReference>
<dbReference type="SMR" id="B5RLH0"/>
<dbReference type="STRING" id="412419.BDU_99"/>
<dbReference type="KEGG" id="bdu:BDU_99"/>
<dbReference type="eggNOG" id="COG1390">
    <property type="taxonomic scope" value="Bacteria"/>
</dbReference>
<dbReference type="HOGENOM" id="CLU_105793_0_1_12"/>
<dbReference type="OrthoDB" id="1771105at2"/>
<dbReference type="Proteomes" id="UP000000611">
    <property type="component" value="Chromosome"/>
</dbReference>
<dbReference type="GO" id="GO:0033178">
    <property type="term" value="C:proton-transporting two-sector ATPase complex, catalytic domain"/>
    <property type="evidence" value="ECO:0007669"/>
    <property type="project" value="InterPro"/>
</dbReference>
<dbReference type="GO" id="GO:0005524">
    <property type="term" value="F:ATP binding"/>
    <property type="evidence" value="ECO:0007669"/>
    <property type="project" value="UniProtKB-UniRule"/>
</dbReference>
<dbReference type="GO" id="GO:0046933">
    <property type="term" value="F:proton-transporting ATP synthase activity, rotational mechanism"/>
    <property type="evidence" value="ECO:0007669"/>
    <property type="project" value="UniProtKB-UniRule"/>
</dbReference>
<dbReference type="GO" id="GO:0046961">
    <property type="term" value="F:proton-transporting ATPase activity, rotational mechanism"/>
    <property type="evidence" value="ECO:0007669"/>
    <property type="project" value="InterPro"/>
</dbReference>
<dbReference type="GO" id="GO:0042777">
    <property type="term" value="P:proton motive force-driven plasma membrane ATP synthesis"/>
    <property type="evidence" value="ECO:0007669"/>
    <property type="project" value="UniProtKB-UniRule"/>
</dbReference>
<dbReference type="Gene3D" id="3.30.2320.30">
    <property type="entry name" value="ATP synthase, E subunit, C-terminal"/>
    <property type="match status" value="1"/>
</dbReference>
<dbReference type="HAMAP" id="MF_00311">
    <property type="entry name" value="ATP_synth_E_arch"/>
    <property type="match status" value="1"/>
</dbReference>
<dbReference type="InterPro" id="IPR038495">
    <property type="entry name" value="ATPase_E_C"/>
</dbReference>
<dbReference type="InterPro" id="IPR002842">
    <property type="entry name" value="ATPase_V1_Esu"/>
</dbReference>
<dbReference type="NCBIfam" id="NF002424">
    <property type="entry name" value="PRK01558.1"/>
    <property type="match status" value="1"/>
</dbReference>
<dbReference type="SUPFAM" id="SSF160527">
    <property type="entry name" value="V-type ATPase subunit E-like"/>
    <property type="match status" value="1"/>
</dbReference>
<reference key="1">
    <citation type="journal article" date="2008" name="PLoS Genet.">
        <title>The genome of Borrelia recurrentis, the agent of deadly louse-borne relapsing fever, is a degraded subset of tick-borne Borrelia duttonii.</title>
        <authorList>
            <person name="Lescot M."/>
            <person name="Audic S."/>
            <person name="Robert C."/>
            <person name="Nguyen T.T."/>
            <person name="Blanc G."/>
            <person name="Cutler S.J."/>
            <person name="Wincker P."/>
            <person name="Couloux A."/>
            <person name="Claverie J.-M."/>
            <person name="Raoult D."/>
            <person name="Drancourt M."/>
        </authorList>
    </citation>
    <scope>NUCLEOTIDE SEQUENCE [LARGE SCALE GENOMIC DNA]</scope>
    <source>
        <strain>Ly</strain>
    </source>
</reference>
<proteinExistence type="inferred from homology"/>
<organism>
    <name type="scientific">Borrelia duttonii (strain Ly)</name>
    <dbReference type="NCBI Taxonomy" id="412419"/>
    <lineage>
        <taxon>Bacteria</taxon>
        <taxon>Pseudomonadati</taxon>
        <taxon>Spirochaetota</taxon>
        <taxon>Spirochaetia</taxon>
        <taxon>Spirochaetales</taxon>
        <taxon>Borreliaceae</taxon>
        <taxon>Borrelia</taxon>
    </lineage>
</organism>
<sequence length="198" mass="22788">MQFEVKDLINKIKKDGLDEAERLSSEIILNAKQEAEAIILKAESEAKELKIKAEKEAYDYKRYSLEASRQAFRDLVIGTENSIKSLFKSALKDSVSSVYDSNFLRELIIRVLDVWGKDDKIDIMLNESDIDNLSSILKTSIRNKFGAEIEIKPFKGINKGFKVQQRDGSLYYDFTSEAIADILFEYLNPRFKEIIKLD</sequence>
<evidence type="ECO:0000255" key="1">
    <source>
        <dbReference type="HAMAP-Rule" id="MF_00311"/>
    </source>
</evidence>
<keyword id="KW-0066">ATP synthesis</keyword>
<keyword id="KW-0375">Hydrogen ion transport</keyword>
<keyword id="KW-0406">Ion transport</keyword>
<keyword id="KW-0813">Transport</keyword>
<feature type="chain" id="PRO_1000119526" description="V-type proton ATPase subunit E">
    <location>
        <begin position="1"/>
        <end position="198"/>
    </location>
</feature>
<name>VATE_BORDL</name>
<comment type="function">
    <text evidence="1">Produces ATP from ADP in the presence of a proton gradient across the membrane.</text>
</comment>
<comment type="similarity">
    <text evidence="1">Belongs to the V-ATPase E subunit family.</text>
</comment>